<gene>
    <name evidence="17 21" type="primary">GBP2</name>
</gene>
<organism>
    <name type="scientific">Homo sapiens</name>
    <name type="common">Human</name>
    <dbReference type="NCBI Taxonomy" id="9606"/>
    <lineage>
        <taxon>Eukaryota</taxon>
        <taxon>Metazoa</taxon>
        <taxon>Chordata</taxon>
        <taxon>Craniata</taxon>
        <taxon>Vertebrata</taxon>
        <taxon>Euteleostomi</taxon>
        <taxon>Mammalia</taxon>
        <taxon>Eutheria</taxon>
        <taxon>Euarchontoglires</taxon>
        <taxon>Primates</taxon>
        <taxon>Haplorrhini</taxon>
        <taxon>Catarrhini</taxon>
        <taxon>Hominidae</taxon>
        <taxon>Homo</taxon>
    </lineage>
</organism>
<name>GBP2_HUMAN</name>
<keyword id="KW-0002">3D-structure</keyword>
<keyword id="KW-0929">Antimicrobial</keyword>
<keyword id="KW-0963">Cytoplasm</keyword>
<keyword id="KW-0968">Cytoplasmic vesicle</keyword>
<keyword id="KW-0333">Golgi apparatus</keyword>
<keyword id="KW-0342">GTP-binding</keyword>
<keyword id="KW-0378">Hydrolase</keyword>
<keyword id="KW-0391">Immunity</keyword>
<keyword id="KW-0399">Innate immunity</keyword>
<keyword id="KW-0449">Lipoprotein</keyword>
<keyword id="KW-0472">Membrane</keyword>
<keyword id="KW-0488">Methylation</keyword>
<keyword id="KW-0547">Nucleotide-binding</keyword>
<keyword id="KW-0636">Prenylation</keyword>
<keyword id="KW-1267">Proteomics identification</keyword>
<keyword id="KW-1185">Reference proteome</keyword>
<keyword id="KW-0832">Ubl conjugation</keyword>
<evidence type="ECO:0000250" key="1"/>
<evidence type="ECO:0000250" key="2">
    <source>
        <dbReference type="UniProtKB" id="P32455"/>
    </source>
</evidence>
<evidence type="ECO:0000250" key="3">
    <source>
        <dbReference type="UniProtKB" id="Q96PP8"/>
    </source>
</evidence>
<evidence type="ECO:0000250" key="4">
    <source>
        <dbReference type="UniProtKB" id="Q9Z0E6"/>
    </source>
</evidence>
<evidence type="ECO:0000255" key="5">
    <source>
        <dbReference type="PROSITE-ProRule" id="PRU01052"/>
    </source>
</evidence>
<evidence type="ECO:0000269" key="6">
    <source>
    </source>
</evidence>
<evidence type="ECO:0000269" key="7">
    <source>
    </source>
</evidence>
<evidence type="ECO:0000269" key="8">
    <source>
    </source>
</evidence>
<evidence type="ECO:0000269" key="9">
    <source>
    </source>
</evidence>
<evidence type="ECO:0000269" key="10">
    <source>
    </source>
</evidence>
<evidence type="ECO:0000269" key="11">
    <source>
    </source>
</evidence>
<evidence type="ECO:0000269" key="12">
    <source>
    </source>
</evidence>
<evidence type="ECO:0000269" key="13">
    <source>
    </source>
</evidence>
<evidence type="ECO:0000269" key="14">
    <source>
    </source>
</evidence>
<evidence type="ECO:0000269" key="15">
    <source ref="5"/>
</evidence>
<evidence type="ECO:0000269" key="16">
    <source ref="7"/>
</evidence>
<evidence type="ECO:0000303" key="17">
    <source>
    </source>
</evidence>
<evidence type="ECO:0000305" key="18"/>
<evidence type="ECO:0000305" key="19">
    <source>
    </source>
</evidence>
<evidence type="ECO:0000305" key="20">
    <source>
    </source>
</evidence>
<evidence type="ECO:0000312" key="21">
    <source>
        <dbReference type="HGNC" id="HGNC:4183"/>
    </source>
</evidence>
<evidence type="ECO:0007744" key="22">
    <source>
        <dbReference type="PDB" id="7E58"/>
    </source>
</evidence>
<evidence type="ECO:0007829" key="23">
    <source>
        <dbReference type="PDB" id="6VKJ"/>
    </source>
</evidence>
<evidence type="ECO:0007829" key="24">
    <source>
        <dbReference type="PDB" id="7E58"/>
    </source>
</evidence>
<evidence type="ECO:0007829" key="25">
    <source>
        <dbReference type="PDB" id="7M1S"/>
    </source>
</evidence>
<proteinExistence type="evidence at protein level"/>
<dbReference type="EC" id="3.6.5.-" evidence="14"/>
<dbReference type="EMBL" id="M55543">
    <property type="protein sequence ID" value="AAA67323.1"/>
    <property type="molecule type" value="mRNA"/>
</dbReference>
<dbReference type="EMBL" id="AL832451">
    <property type="protein sequence ID" value="CAD89925.1"/>
    <property type="molecule type" value="mRNA"/>
</dbReference>
<dbReference type="EMBL" id="AK314325">
    <property type="protein sequence ID" value="BAG36973.1"/>
    <property type="molecule type" value="mRNA"/>
</dbReference>
<dbReference type="EMBL" id="CR457062">
    <property type="protein sequence ID" value="CAG33343.1"/>
    <property type="molecule type" value="mRNA"/>
</dbReference>
<dbReference type="EMBL" id="AC104459">
    <property type="status" value="NOT_ANNOTATED_CDS"/>
    <property type="molecule type" value="Genomic_DNA"/>
</dbReference>
<dbReference type="EMBL" id="CH471097">
    <property type="protein sequence ID" value="EAW73146.1"/>
    <property type="molecule type" value="Genomic_DNA"/>
</dbReference>
<dbReference type="EMBL" id="BC073163">
    <property type="protein sequence ID" value="AAH73163.1"/>
    <property type="molecule type" value="mRNA"/>
</dbReference>
<dbReference type="CCDS" id="CCDS719.1"/>
<dbReference type="PIR" id="S70524">
    <property type="entry name" value="S70524"/>
</dbReference>
<dbReference type="RefSeq" id="NP_004111.2">
    <property type="nucleotide sequence ID" value="NM_004120.4"/>
</dbReference>
<dbReference type="PDB" id="6VKJ">
    <property type="method" value="X-ray"/>
    <property type="resolution" value="2.10 A"/>
    <property type="chains" value="A=5-309"/>
</dbReference>
<dbReference type="PDB" id="7E58">
    <property type="method" value="X-ray"/>
    <property type="resolution" value="2.60 A"/>
    <property type="chains" value="A/B=1-591"/>
</dbReference>
<dbReference type="PDB" id="7M1S">
    <property type="method" value="X-ray"/>
    <property type="resolution" value="2.91 A"/>
    <property type="chains" value="A=1-591"/>
</dbReference>
<dbReference type="PDBsum" id="6VKJ"/>
<dbReference type="PDBsum" id="7E58"/>
<dbReference type="PDBsum" id="7M1S"/>
<dbReference type="SMR" id="P32456"/>
<dbReference type="BioGRID" id="108904">
    <property type="interactions" value="55"/>
</dbReference>
<dbReference type="FunCoup" id="P32456">
    <property type="interactions" value="681"/>
</dbReference>
<dbReference type="IntAct" id="P32456">
    <property type="interactions" value="39"/>
</dbReference>
<dbReference type="MINT" id="P32456"/>
<dbReference type="STRING" id="9606.ENSP00000359497"/>
<dbReference type="iPTMnet" id="P32456"/>
<dbReference type="PhosphoSitePlus" id="P32456"/>
<dbReference type="BioMuta" id="GBP2"/>
<dbReference type="DMDM" id="226694187"/>
<dbReference type="jPOST" id="P32456"/>
<dbReference type="MassIVE" id="P32456"/>
<dbReference type="PaxDb" id="9606-ENSP00000359497"/>
<dbReference type="PeptideAtlas" id="P32456"/>
<dbReference type="ProteomicsDB" id="54878"/>
<dbReference type="Pumba" id="P32456"/>
<dbReference type="Antibodypedia" id="33611">
    <property type="antibodies" value="391 antibodies from 29 providers"/>
</dbReference>
<dbReference type="DNASU" id="2634"/>
<dbReference type="Ensembl" id="ENST00000370466.4">
    <property type="protein sequence ID" value="ENSP00000359497.3"/>
    <property type="gene ID" value="ENSG00000162645.13"/>
</dbReference>
<dbReference type="Ensembl" id="ENST00000464839.5">
    <property type="protein sequence ID" value="ENSP00000434282.1"/>
    <property type="gene ID" value="ENSG00000162645.13"/>
</dbReference>
<dbReference type="GeneID" id="2634"/>
<dbReference type="KEGG" id="hsa:2634"/>
<dbReference type="MANE-Select" id="ENST00000370466.4">
    <property type="protein sequence ID" value="ENSP00000359497.3"/>
    <property type="RefSeq nucleotide sequence ID" value="NM_004120.5"/>
    <property type="RefSeq protein sequence ID" value="NP_004111.2"/>
</dbReference>
<dbReference type="UCSC" id="uc001dmz.3">
    <property type="organism name" value="human"/>
</dbReference>
<dbReference type="AGR" id="HGNC:4183"/>
<dbReference type="CTD" id="2634"/>
<dbReference type="DisGeNET" id="2634"/>
<dbReference type="GeneCards" id="GBP2"/>
<dbReference type="HGNC" id="HGNC:4183">
    <property type="gene designation" value="GBP2"/>
</dbReference>
<dbReference type="HPA" id="ENSG00000162645">
    <property type="expression patterns" value="Low tissue specificity"/>
</dbReference>
<dbReference type="MIM" id="600412">
    <property type="type" value="gene"/>
</dbReference>
<dbReference type="neXtProt" id="NX_P32456"/>
<dbReference type="OpenTargets" id="ENSG00000162645"/>
<dbReference type="PharmGKB" id="PA28597"/>
<dbReference type="VEuPathDB" id="HostDB:ENSG00000162645"/>
<dbReference type="eggNOG" id="KOG2037">
    <property type="taxonomic scope" value="Eukaryota"/>
</dbReference>
<dbReference type="GeneTree" id="ENSGT00940000162297"/>
<dbReference type="HOGENOM" id="CLU_018608_2_2_1"/>
<dbReference type="InParanoid" id="P32456"/>
<dbReference type="OMA" id="QPTCHIL"/>
<dbReference type="OrthoDB" id="2135133at2759"/>
<dbReference type="PAN-GO" id="P32456">
    <property type="GO annotations" value="6 GO annotations based on evolutionary models"/>
</dbReference>
<dbReference type="PhylomeDB" id="P32456"/>
<dbReference type="TreeFam" id="TF331602"/>
<dbReference type="PathwayCommons" id="P32456"/>
<dbReference type="Reactome" id="R-HSA-877300">
    <property type="pathway name" value="Interferon gamma signaling"/>
</dbReference>
<dbReference type="Reactome" id="R-HSA-909733">
    <property type="pathway name" value="Interferon alpha/beta signaling"/>
</dbReference>
<dbReference type="SignaLink" id="P32456"/>
<dbReference type="BioGRID-ORCS" id="2634">
    <property type="hits" value="22 hits in 1157 CRISPR screens"/>
</dbReference>
<dbReference type="CD-CODE" id="DEE660B4">
    <property type="entry name" value="Stress granule"/>
</dbReference>
<dbReference type="ChiTaRS" id="GBP2">
    <property type="organism name" value="human"/>
</dbReference>
<dbReference type="GeneWiki" id="GBP2"/>
<dbReference type="GenomeRNAi" id="2634"/>
<dbReference type="Pharos" id="P32456">
    <property type="development level" value="Tbio"/>
</dbReference>
<dbReference type="PRO" id="PR:P32456"/>
<dbReference type="Proteomes" id="UP000005640">
    <property type="component" value="Chromosome 1"/>
</dbReference>
<dbReference type="RNAct" id="P32456">
    <property type="molecule type" value="protein"/>
</dbReference>
<dbReference type="Bgee" id="ENSG00000162645">
    <property type="expression patterns" value="Expressed in tendon of biceps brachii and 197 other cell types or tissues"/>
</dbReference>
<dbReference type="GO" id="GO:0005737">
    <property type="term" value="C:cytoplasm"/>
    <property type="evidence" value="ECO:0000314"/>
    <property type="project" value="UniProtKB"/>
</dbReference>
<dbReference type="GO" id="GO:0031410">
    <property type="term" value="C:cytoplasmic vesicle"/>
    <property type="evidence" value="ECO:0000250"/>
    <property type="project" value="UniProtKB"/>
</dbReference>
<dbReference type="GO" id="GO:0030659">
    <property type="term" value="C:cytoplasmic vesicle membrane"/>
    <property type="evidence" value="ECO:0007669"/>
    <property type="project" value="UniProtKB-SubCell"/>
</dbReference>
<dbReference type="GO" id="GO:0005829">
    <property type="term" value="C:cytosol"/>
    <property type="evidence" value="ECO:0000314"/>
    <property type="project" value="HPA"/>
</dbReference>
<dbReference type="GO" id="GO:0005794">
    <property type="term" value="C:Golgi apparatus"/>
    <property type="evidence" value="ECO:0000314"/>
    <property type="project" value="UniProtKB"/>
</dbReference>
<dbReference type="GO" id="GO:0000139">
    <property type="term" value="C:Golgi membrane"/>
    <property type="evidence" value="ECO:0000314"/>
    <property type="project" value="UniProt"/>
</dbReference>
<dbReference type="GO" id="GO:0005654">
    <property type="term" value="C:nucleoplasm"/>
    <property type="evidence" value="ECO:0000314"/>
    <property type="project" value="HPA"/>
</dbReference>
<dbReference type="GO" id="GO:0005634">
    <property type="term" value="C:nucleus"/>
    <property type="evidence" value="ECO:0000314"/>
    <property type="project" value="UniProtKB"/>
</dbReference>
<dbReference type="GO" id="GO:0048471">
    <property type="term" value="C:perinuclear region of cytoplasm"/>
    <property type="evidence" value="ECO:0000314"/>
    <property type="project" value="UniProtKB"/>
</dbReference>
<dbReference type="GO" id="GO:0004866">
    <property type="term" value="F:endopeptidase inhibitor activity"/>
    <property type="evidence" value="ECO:0000314"/>
    <property type="project" value="UniProt"/>
</dbReference>
<dbReference type="GO" id="GO:0005525">
    <property type="term" value="F:GTP binding"/>
    <property type="evidence" value="ECO:0000318"/>
    <property type="project" value="GO_Central"/>
</dbReference>
<dbReference type="GO" id="GO:0003924">
    <property type="term" value="F:GTPase activity"/>
    <property type="evidence" value="ECO:0000318"/>
    <property type="project" value="GO_Central"/>
</dbReference>
<dbReference type="GO" id="GO:0042802">
    <property type="term" value="F:identical protein binding"/>
    <property type="evidence" value="ECO:0000353"/>
    <property type="project" value="IntAct"/>
</dbReference>
<dbReference type="GO" id="GO:0140678">
    <property type="term" value="F:molecular function inhibitor activity"/>
    <property type="evidence" value="ECO:0000314"/>
    <property type="project" value="UniProtKB"/>
</dbReference>
<dbReference type="GO" id="GO:0042803">
    <property type="term" value="F:protein homodimerization activity"/>
    <property type="evidence" value="ECO:0000314"/>
    <property type="project" value="UniProtKB"/>
</dbReference>
<dbReference type="GO" id="GO:0002218">
    <property type="term" value="P:activation of innate immune response"/>
    <property type="evidence" value="ECO:0000250"/>
    <property type="project" value="UniProtKB"/>
</dbReference>
<dbReference type="GO" id="GO:0071347">
    <property type="term" value="P:cellular response to interleukin-1"/>
    <property type="evidence" value="ECO:0000270"/>
    <property type="project" value="UniProtKB"/>
</dbReference>
<dbReference type="GO" id="GO:0071222">
    <property type="term" value="P:cellular response to lipopolysaccharide"/>
    <property type="evidence" value="ECO:0000250"/>
    <property type="project" value="UniProtKB"/>
</dbReference>
<dbReference type="GO" id="GO:0071356">
    <property type="term" value="P:cellular response to tumor necrosis factor"/>
    <property type="evidence" value="ECO:0000270"/>
    <property type="project" value="UniProtKB"/>
</dbReference>
<dbReference type="GO" id="GO:0071346">
    <property type="term" value="P:cellular response to type II interferon"/>
    <property type="evidence" value="ECO:0000314"/>
    <property type="project" value="UniProtKB"/>
</dbReference>
<dbReference type="GO" id="GO:0051715">
    <property type="term" value="P:cytolysis in another organism"/>
    <property type="evidence" value="ECO:0000250"/>
    <property type="project" value="UniProtKB"/>
</dbReference>
<dbReference type="GO" id="GO:0042742">
    <property type="term" value="P:defense response to bacterium"/>
    <property type="evidence" value="ECO:0000250"/>
    <property type="project" value="UniProtKB"/>
</dbReference>
<dbReference type="GO" id="GO:0050830">
    <property type="term" value="P:defense response to Gram-positive bacterium"/>
    <property type="evidence" value="ECO:0000318"/>
    <property type="project" value="GO_Central"/>
</dbReference>
<dbReference type="GO" id="GO:0042832">
    <property type="term" value="P:defense response to protozoan"/>
    <property type="evidence" value="ECO:0000318"/>
    <property type="project" value="GO_Central"/>
</dbReference>
<dbReference type="GO" id="GO:0051607">
    <property type="term" value="P:defense response to virus"/>
    <property type="evidence" value="ECO:0000314"/>
    <property type="project" value="UniProtKB"/>
</dbReference>
<dbReference type="GO" id="GO:0006955">
    <property type="term" value="P:immune response"/>
    <property type="evidence" value="ECO:0000304"/>
    <property type="project" value="ProtInc"/>
</dbReference>
<dbReference type="GO" id="GO:0140973">
    <property type="term" value="P:positive regulation of AIM2 inflammasome complex assembly"/>
    <property type="evidence" value="ECO:0000250"/>
    <property type="project" value="UniProtKB"/>
</dbReference>
<dbReference type="GO" id="GO:0140639">
    <property type="term" value="P:positive regulation of pyroptotic inflammatory response"/>
    <property type="evidence" value="ECO:0000250"/>
    <property type="project" value="UniProtKB"/>
</dbReference>
<dbReference type="GO" id="GO:0034504">
    <property type="term" value="P:protein localization to nucleus"/>
    <property type="evidence" value="ECO:0000314"/>
    <property type="project" value="UniProtKB"/>
</dbReference>
<dbReference type="CDD" id="cd01851">
    <property type="entry name" value="GBP"/>
    <property type="match status" value="1"/>
</dbReference>
<dbReference type="CDD" id="cd16269">
    <property type="entry name" value="GBP_C"/>
    <property type="match status" value="1"/>
</dbReference>
<dbReference type="FunFam" id="1.20.1000.10:FF:000001">
    <property type="entry name" value="Guanylate binding protein 1"/>
    <property type="match status" value="1"/>
</dbReference>
<dbReference type="FunFam" id="3.40.50.300:FF:000422">
    <property type="entry name" value="Guanylate-binding protein 1"/>
    <property type="match status" value="1"/>
</dbReference>
<dbReference type="Gene3D" id="1.20.1000.10">
    <property type="entry name" value="Guanylate-binding protein, C-terminal domain"/>
    <property type="match status" value="1"/>
</dbReference>
<dbReference type="Gene3D" id="3.40.50.300">
    <property type="entry name" value="P-loop containing nucleotide triphosphate hydrolases"/>
    <property type="match status" value="1"/>
</dbReference>
<dbReference type="InterPro" id="IPR030386">
    <property type="entry name" value="G_GB1_RHD3_dom"/>
</dbReference>
<dbReference type="InterPro" id="IPR037684">
    <property type="entry name" value="GBP_C"/>
</dbReference>
<dbReference type="InterPro" id="IPR003191">
    <property type="entry name" value="Guanylate-bd/ATL_C"/>
</dbReference>
<dbReference type="InterPro" id="IPR036543">
    <property type="entry name" value="Guanylate-bd_C_sf"/>
</dbReference>
<dbReference type="InterPro" id="IPR015894">
    <property type="entry name" value="Guanylate-bd_N"/>
</dbReference>
<dbReference type="InterPro" id="IPR027417">
    <property type="entry name" value="P-loop_NTPase"/>
</dbReference>
<dbReference type="PANTHER" id="PTHR10751">
    <property type="entry name" value="GUANYLATE BINDING PROTEIN"/>
    <property type="match status" value="1"/>
</dbReference>
<dbReference type="Pfam" id="PF02263">
    <property type="entry name" value="GBP"/>
    <property type="match status" value="1"/>
</dbReference>
<dbReference type="Pfam" id="PF02841">
    <property type="entry name" value="GBP_C"/>
    <property type="match status" value="1"/>
</dbReference>
<dbReference type="SUPFAM" id="SSF48340">
    <property type="entry name" value="Interferon-induced guanylate-binding protein 1 (GBP1), C-terminal domain"/>
    <property type="match status" value="1"/>
</dbReference>
<dbReference type="SUPFAM" id="SSF52540">
    <property type="entry name" value="P-loop containing nucleoside triphosphate hydrolases"/>
    <property type="match status" value="1"/>
</dbReference>
<dbReference type="PROSITE" id="PS51715">
    <property type="entry name" value="G_GB1_RHD3"/>
    <property type="match status" value="1"/>
</dbReference>
<sequence length="591" mass="67209">MAPEINLPGPMSLIDNTKGQLVVNPEALKILSAITQPVVVVAIVGLYRTGKSYLMNKLAGKKNGFSLGSTVKSHTKGIWMWCVPHPKKPEHTLVLLDTEGLGDIEKGDNENDSWIFALAILLSSTFVYNSMGTINQQAMDQLHYVTELTDRIKANSSPGNNSVDDSADFVSFFPAFVWTLRDFTLELEVDGEPITADDYLELSLKLRKGTDKKSKSFNDPRLCIRKFFPKRKCFVFDWPAPKKYLAHLEQLKEEELNPDFIEQVAEFCSYILSHSNVKTLSGGIPVNGPRLESLVLTYVNAISSGDLPCMENAVLALAQIENSAAVEKAIAHYEQQMGQKVQLPTETLQELLDLHRDSEREAIEVFMKNSFKDVDQMFQRKLGAQLEARRDDFCKQNSKASSDCCMALLQDIFGPLEEDVKQGTFSKPGGYRLFTQKLQELKNKYYQVPRKGIQAKEVLKKYLESKEDVADALLQTDQSLSEKEKAIEVERIKAESAEAAKKMLEEIQKKNEEMMEQKEKSYQEHVKQLTEKMERDRAQLMAEQEKTLALKLQEQERLLKEGFENESKRLQKDIWDIQMRSKSLEPICNIL</sequence>
<protein>
    <recommendedName>
        <fullName>Guanylate-binding protein 2</fullName>
        <ecNumber evidence="14">3.6.5.-</ecNumber>
    </recommendedName>
    <alternativeName>
        <fullName evidence="17">GTP-binding protein 2</fullName>
        <shortName evidence="17">GBP-2</shortName>
        <shortName>HuGBP-2</shortName>
    </alternativeName>
    <alternativeName>
        <fullName evidence="17">Guanine nucleotide-binding protein 2</fullName>
    </alternativeName>
    <alternativeName>
        <fullName>Interferon-induced guanylate-binding protein 2</fullName>
    </alternativeName>
</protein>
<comment type="function">
    <text evidence="4 13 14">Interferon (IFN)-inducible GTPase that plays important roles in innate immunity against a diverse range of bacterial, viral and protozoan pathogens (PubMed:31091448). Hydrolyzes GTP to GMP in 2 consecutive cleavage reactions, but the major reaction product is GDP (PubMed:8706832). Following infection, recruited to the pathogen-containing vacuoles or vacuole-escaped bacteria and acts as a positive regulator of inflammasome assembly by promoting the release of inflammasome ligands from bacteria (By similarity). Acts by promoting lysis of pathogen-containing vacuoles, releasing pathogens into the cytosol (By similarity). Following pathogen release in the cytosol, promotes recruitment of proteins that mediate bacterial cytolysis: this liberates ligands that are detected by inflammasomes, such as lipopolysaccharide (LPS) that activates the non-canonical CASP4/CASP11 inflammasome or double-stranded DNA (dsDNA) that activates the AIM2 inflammasome (By similarity). Confers protection to the protozoan pathogen Toxoplasma gondii (By similarity). Independently of its GTPase activity, acts as an inhibitor of various viruses infectivity, such as HIV-1, Zika and influenza A viruses, by inhibiting FURIN-mediated maturation of viral envelope proteins (PubMed:31091448).</text>
</comment>
<comment type="catalytic activity">
    <reaction evidence="14">
        <text>GTP + H2O = GDP + phosphate + H(+)</text>
        <dbReference type="Rhea" id="RHEA:19669"/>
        <dbReference type="ChEBI" id="CHEBI:15377"/>
        <dbReference type="ChEBI" id="CHEBI:15378"/>
        <dbReference type="ChEBI" id="CHEBI:37565"/>
        <dbReference type="ChEBI" id="CHEBI:43474"/>
        <dbReference type="ChEBI" id="CHEBI:58189"/>
    </reaction>
</comment>
<comment type="biophysicochemical properties">
    <kinetics>
        <KM evidence="14">313 uM for GTP</KM>
    </kinetics>
</comment>
<comment type="subunit">
    <text evidence="10">Homodimer; homodimerization occurs upon GTP-binding and is required for the association with membranous structures (PubMed:21151871). Heterodimer with other family members, including GBP1, GBP3, GBP4 and GBP5 (PubMed:21151871).</text>
</comment>
<comment type="interaction">
    <interactant intactId="EBI-714388">
        <id>P32456</id>
    </interactant>
    <interactant intactId="EBI-2869161">
        <id>P32455</id>
        <label>GBP1</label>
    </interactant>
    <organismsDiffer>false</organismsDiffer>
    <experiments>11</experiments>
</comment>
<comment type="interaction">
    <interactant intactId="EBI-714388">
        <id>P32456</id>
    </interactant>
    <interactant intactId="EBI-714388">
        <id>P32456</id>
        <label>GBP2</label>
    </interactant>
    <organismsDiffer>false</organismsDiffer>
    <experiments>5</experiments>
</comment>
<comment type="interaction">
    <interactant intactId="EBI-714388">
        <id>P32456</id>
    </interactant>
    <interactant intactId="EBI-2798916">
        <id>Q9H0R5</id>
        <label>GBP3</label>
    </interactant>
    <organismsDiffer>false</organismsDiffer>
    <experiments>5</experiments>
</comment>
<comment type="interaction">
    <interactant intactId="EBI-714388">
        <id>P32456</id>
    </interactant>
    <interactant intactId="EBI-20840650">
        <id>Q96PP9</id>
        <label>GBP4</label>
    </interactant>
    <organismsDiffer>false</organismsDiffer>
    <experiments>2</experiments>
</comment>
<comment type="interaction">
    <interactant intactId="EBI-714388">
        <id>P32456</id>
    </interactant>
    <interactant intactId="EBI-749932">
        <id>Q96PP8</id>
        <label>GBP5</label>
    </interactant>
    <organismsDiffer>false</organismsDiffer>
    <experiments>7</experiments>
</comment>
<comment type="interaction">
    <interactant intactId="EBI-714388">
        <id>P32456</id>
    </interactant>
    <interactant intactId="EBI-6863741">
        <id>PRO_0000037548</id>
        <dbReference type="UniProtKB" id="Q9WMX2"/>
    </interactant>
    <organismsDiffer>true</organismsDiffer>
    <experiments>2</experiments>
</comment>
<comment type="subcellular location">
    <subcellularLocation>
        <location evidence="4">Cytoplasmic vesicle membrane</location>
        <topology evidence="10">Lipid-anchor</topology>
    </subcellularLocation>
    <subcellularLocation>
        <location evidence="10 13">Golgi apparatus membrane</location>
        <topology evidence="10">Lipid-anchor</topology>
    </subcellularLocation>
    <subcellularLocation>
        <location evidence="10">Cytoplasm</location>
    </subcellularLocation>
    <subcellularLocation>
        <location evidence="10">Cytoplasm</location>
        <location evidence="10">Perinuclear region</location>
    </subcellularLocation>
    <text evidence="10">GBP2-GBP5 dimers localize to the Golgi apparatus.</text>
</comment>
<comment type="induction">
    <text evidence="8">By IFNG/IFN-gamma during macrophage activation, and by TNF and IL1B.</text>
</comment>
<comment type="PTM">
    <text evidence="11 12">(Microbial infection) Ubiquitinated by S.flexneri IpaH9.8, leading to its degradation by the proteasome, thereby preventing its ability to promote host defense against bacterial infection.</text>
</comment>
<comment type="PTM">
    <text evidence="10">Isoprenylation is required for proper subcellular location.</text>
</comment>
<comment type="similarity">
    <text evidence="5">Belongs to the TRAFAC class dynamin-like GTPase superfamily. GB1/RHD3 GTPase family. GB1 subfamily.</text>
</comment>
<feature type="chain" id="PRO_0000190964" description="Guanylate-binding protein 2">
    <location>
        <begin position="1"/>
        <end position="588"/>
    </location>
</feature>
<feature type="propeptide" id="PRO_0000370782" description="Removed in mature form" evidence="1">
    <location>
        <begin position="589"/>
        <end position="591"/>
    </location>
</feature>
<feature type="domain" description="GB1/RHD3-type G" evidence="5">
    <location>
        <begin position="35"/>
        <end position="276"/>
    </location>
</feature>
<feature type="region of interest" description="GTPase domain (Globular)" evidence="2">
    <location>
        <begin position="1"/>
        <end position="309"/>
    </location>
</feature>
<feature type="binding site" evidence="3">
    <location>
        <begin position="45"/>
        <end position="52"/>
    </location>
    <ligand>
        <name>GTP</name>
        <dbReference type="ChEBI" id="CHEBI:37565"/>
    </ligand>
</feature>
<feature type="binding site" evidence="3">
    <location>
        <begin position="181"/>
        <end position="182"/>
    </location>
    <ligand>
        <name>GTP</name>
        <dbReference type="ChEBI" id="CHEBI:37565"/>
    </ligand>
</feature>
<feature type="binding site" evidence="3">
    <location>
        <position position="245"/>
    </location>
    <ligand>
        <name>GTP</name>
        <dbReference type="ChEBI" id="CHEBI:37565"/>
    </ligand>
</feature>
<feature type="modified residue" description="Cysteine methyl ester" evidence="19">
    <location>
        <position position="588"/>
    </location>
</feature>
<feature type="lipid moiety-binding region" description="S-geranylgeranyl cysteine" evidence="10 20">
    <location>
        <position position="588"/>
    </location>
</feature>
<feature type="sequence variant" id="VAR_054815" description="In dbSNP:rs2230336.">
    <original>S</original>
    <variation>P</variation>
    <location>
        <position position="281"/>
    </location>
</feature>
<feature type="sequence variant" id="VAR_054816" description="In dbSNP:rs1803632." evidence="6 7 9 15 16">
    <original>P</original>
    <variation>A</variation>
    <location>
        <position position="285"/>
    </location>
</feature>
<feature type="sequence variant" id="VAR_054817" description="In dbSNP:rs2230338." evidence="6 9 15 16">
    <original>S</original>
    <variation>G</variation>
    <location>
        <position position="303"/>
    </location>
</feature>
<feature type="mutagenesis site" description="No effect on subcellular location by confocal microscopy, but loss of membrane-association by subcellular fractionation." evidence="10">
    <location>
        <begin position="588"/>
        <end position="591"/>
    </location>
</feature>
<feature type="mutagenesis site" description="Loss of isoprenylation and of localization at the Golgi apparatus." evidence="13">
    <original>C</original>
    <variation>A</variation>
    <location>
        <position position="588"/>
    </location>
</feature>
<feature type="sequence conflict" description="In Ref. 8; AAH73163." evidence="18" ref="8">
    <original>M</original>
    <variation>R</variation>
    <location>
        <position position="310"/>
    </location>
</feature>
<feature type="strand" evidence="23">
    <location>
        <begin position="11"/>
        <end position="15"/>
    </location>
</feature>
<feature type="strand" evidence="24">
    <location>
        <begin position="20"/>
        <end position="23"/>
    </location>
</feature>
<feature type="helix" evidence="23">
    <location>
        <begin position="25"/>
        <end position="32"/>
    </location>
</feature>
<feature type="strand" evidence="23">
    <location>
        <begin position="36"/>
        <end position="44"/>
    </location>
</feature>
<feature type="helix" evidence="23">
    <location>
        <begin position="51"/>
        <end position="59"/>
    </location>
</feature>
<feature type="helix" evidence="23">
    <location>
        <begin position="67"/>
        <end position="70"/>
    </location>
</feature>
<feature type="strand" evidence="25">
    <location>
        <begin position="71"/>
        <end position="74"/>
    </location>
</feature>
<feature type="strand" evidence="23">
    <location>
        <begin position="77"/>
        <end position="84"/>
    </location>
</feature>
<feature type="strand" evidence="23">
    <location>
        <begin position="86"/>
        <end position="88"/>
    </location>
</feature>
<feature type="strand" evidence="23">
    <location>
        <begin position="92"/>
        <end position="99"/>
    </location>
</feature>
<feature type="helix" evidence="23">
    <location>
        <begin position="104"/>
        <end position="106"/>
    </location>
</feature>
<feature type="turn" evidence="23">
    <location>
        <begin position="111"/>
        <end position="113"/>
    </location>
</feature>
<feature type="helix" evidence="23">
    <location>
        <begin position="114"/>
        <end position="122"/>
    </location>
</feature>
<feature type="strand" evidence="23">
    <location>
        <begin position="124"/>
        <end position="133"/>
    </location>
</feature>
<feature type="helix" evidence="23">
    <location>
        <begin position="136"/>
        <end position="154"/>
    </location>
</feature>
<feature type="turn" evidence="23">
    <location>
        <begin position="157"/>
        <end position="161"/>
    </location>
</feature>
<feature type="helix" evidence="23">
    <location>
        <begin position="167"/>
        <end position="172"/>
    </location>
</feature>
<feature type="strand" evidence="23">
    <location>
        <begin position="175"/>
        <end position="182"/>
    </location>
</feature>
<feature type="strand" evidence="24">
    <location>
        <begin position="187"/>
        <end position="189"/>
    </location>
</feature>
<feature type="helix" evidence="23">
    <location>
        <begin position="196"/>
        <end position="204"/>
    </location>
</feature>
<feature type="strand" evidence="23">
    <location>
        <begin position="212"/>
        <end position="214"/>
    </location>
</feature>
<feature type="turn" evidence="23">
    <location>
        <begin position="215"/>
        <end position="217"/>
    </location>
</feature>
<feature type="helix" evidence="23">
    <location>
        <begin position="218"/>
        <end position="227"/>
    </location>
</feature>
<feature type="strand" evidence="23">
    <location>
        <begin position="230"/>
        <end position="235"/>
    </location>
</feature>
<feature type="helix" evidence="23">
    <location>
        <begin position="242"/>
        <end position="250"/>
    </location>
</feature>
<feature type="helix" evidence="23">
    <location>
        <begin position="253"/>
        <end position="255"/>
    </location>
</feature>
<feature type="helix" evidence="23">
    <location>
        <begin position="258"/>
        <end position="274"/>
    </location>
</feature>
<feature type="turn" evidence="24">
    <location>
        <begin position="281"/>
        <end position="283"/>
    </location>
</feature>
<feature type="helix" evidence="23">
    <location>
        <begin position="288"/>
        <end position="303"/>
    </location>
</feature>
<feature type="helix" evidence="24">
    <location>
        <begin position="310"/>
        <end position="340"/>
    </location>
</feature>
<feature type="helix" evidence="24">
    <location>
        <begin position="348"/>
        <end position="368"/>
    </location>
</feature>
<feature type="helix" evidence="24">
    <location>
        <begin position="374"/>
        <end position="376"/>
    </location>
</feature>
<feature type="helix" evidence="24">
    <location>
        <begin position="377"/>
        <end position="412"/>
    </location>
</feature>
<feature type="helix" evidence="24">
    <location>
        <begin position="414"/>
        <end position="421"/>
    </location>
</feature>
<feature type="turn" evidence="25">
    <location>
        <begin position="423"/>
        <end position="425"/>
    </location>
</feature>
<feature type="helix" evidence="24">
    <location>
        <begin position="430"/>
        <end position="447"/>
    </location>
</feature>
<feature type="helix" evidence="24">
    <location>
        <begin position="455"/>
        <end position="465"/>
    </location>
</feature>
<feature type="helix" evidence="24">
    <location>
        <begin position="467"/>
        <end position="476"/>
    </location>
</feature>
<feature type="strand" evidence="25">
    <location>
        <begin position="478"/>
        <end position="480"/>
    </location>
</feature>
<feature type="helix" evidence="24">
    <location>
        <begin position="482"/>
        <end position="560"/>
    </location>
</feature>
<feature type="helix" evidence="24">
    <location>
        <begin position="564"/>
        <end position="581"/>
    </location>
</feature>
<accession>P32456</accession>
<accession>Q6GPH0</accession>
<accession>Q6IAU2</accession>
<accession>Q86TB0</accession>
<reference key="1">
    <citation type="journal article" date="1991" name="Mol. Cell. Biol.">
        <title>Interferon-induced guanylate-binding proteins lack an N(T)KXD consensus motif and bind GMP in addition to GDP and GTP.</title>
        <authorList>
            <person name="Cheng Y.-S.E."/>
            <person name="Patterson C.E."/>
            <person name="Staeheli P."/>
        </authorList>
    </citation>
    <scope>NUCLEOTIDE SEQUENCE [MRNA]</scope>
    <scope>VARIANT ALA-285</scope>
    <source>
        <tissue>Keratinocyte</tissue>
    </source>
</reference>
<reference key="2">
    <citation type="submission" date="1991-09" db="EMBL/GenBank/DDBJ databases">
        <authorList>
            <person name="Schwemmle M."/>
        </authorList>
    </citation>
    <scope>SEQUENCE REVISION</scope>
    <source>
        <tissue>Foreskin</tissue>
    </source>
</reference>
<reference key="3">
    <citation type="journal article" date="2007" name="BMC Genomics">
        <title>The full-ORF clone resource of the German cDNA consortium.</title>
        <authorList>
            <person name="Bechtel S."/>
            <person name="Rosenfelder H."/>
            <person name="Duda A."/>
            <person name="Schmidt C.P."/>
            <person name="Ernst U."/>
            <person name="Wellenreuther R."/>
            <person name="Mehrle A."/>
            <person name="Schuster C."/>
            <person name="Bahr A."/>
            <person name="Bloecker H."/>
            <person name="Heubner D."/>
            <person name="Hoerlein A."/>
            <person name="Michel G."/>
            <person name="Wedler H."/>
            <person name="Koehrer K."/>
            <person name="Ottenwaelder B."/>
            <person name="Poustka A."/>
            <person name="Wiemann S."/>
            <person name="Schupp I."/>
        </authorList>
    </citation>
    <scope>NUCLEOTIDE SEQUENCE [LARGE SCALE MRNA]</scope>
    <scope>VARIANTS ALA-285 AND GLY-303</scope>
    <source>
        <tissue>Spinal cord</tissue>
    </source>
</reference>
<reference key="4">
    <citation type="journal article" date="2004" name="Nat. Genet.">
        <title>Complete sequencing and characterization of 21,243 full-length human cDNAs.</title>
        <authorList>
            <person name="Ota T."/>
            <person name="Suzuki Y."/>
            <person name="Nishikawa T."/>
            <person name="Otsuki T."/>
            <person name="Sugiyama T."/>
            <person name="Irie R."/>
            <person name="Wakamatsu A."/>
            <person name="Hayashi K."/>
            <person name="Sato H."/>
            <person name="Nagai K."/>
            <person name="Kimura K."/>
            <person name="Makita H."/>
            <person name="Sekine M."/>
            <person name="Obayashi M."/>
            <person name="Nishi T."/>
            <person name="Shibahara T."/>
            <person name="Tanaka T."/>
            <person name="Ishii S."/>
            <person name="Yamamoto J."/>
            <person name="Saito K."/>
            <person name="Kawai Y."/>
            <person name="Isono Y."/>
            <person name="Nakamura Y."/>
            <person name="Nagahari K."/>
            <person name="Murakami K."/>
            <person name="Yasuda T."/>
            <person name="Iwayanagi T."/>
            <person name="Wagatsuma M."/>
            <person name="Shiratori A."/>
            <person name="Sudo H."/>
            <person name="Hosoiri T."/>
            <person name="Kaku Y."/>
            <person name="Kodaira H."/>
            <person name="Kondo H."/>
            <person name="Sugawara M."/>
            <person name="Takahashi M."/>
            <person name="Kanda K."/>
            <person name="Yokoi T."/>
            <person name="Furuya T."/>
            <person name="Kikkawa E."/>
            <person name="Omura Y."/>
            <person name="Abe K."/>
            <person name="Kamihara K."/>
            <person name="Katsuta N."/>
            <person name="Sato K."/>
            <person name="Tanikawa M."/>
            <person name="Yamazaki M."/>
            <person name="Ninomiya K."/>
            <person name="Ishibashi T."/>
            <person name="Yamashita H."/>
            <person name="Murakawa K."/>
            <person name="Fujimori K."/>
            <person name="Tanai H."/>
            <person name="Kimata M."/>
            <person name="Watanabe M."/>
            <person name="Hiraoka S."/>
            <person name="Chiba Y."/>
            <person name="Ishida S."/>
            <person name="Ono Y."/>
            <person name="Takiguchi S."/>
            <person name="Watanabe S."/>
            <person name="Yosida M."/>
            <person name="Hotuta T."/>
            <person name="Kusano J."/>
            <person name="Kanehori K."/>
            <person name="Takahashi-Fujii A."/>
            <person name="Hara H."/>
            <person name="Tanase T.-O."/>
            <person name="Nomura Y."/>
            <person name="Togiya S."/>
            <person name="Komai F."/>
            <person name="Hara R."/>
            <person name="Takeuchi K."/>
            <person name="Arita M."/>
            <person name="Imose N."/>
            <person name="Musashino K."/>
            <person name="Yuuki H."/>
            <person name="Oshima A."/>
            <person name="Sasaki N."/>
            <person name="Aotsuka S."/>
            <person name="Yoshikawa Y."/>
            <person name="Matsunawa H."/>
            <person name="Ichihara T."/>
            <person name="Shiohata N."/>
            <person name="Sano S."/>
            <person name="Moriya S."/>
            <person name="Momiyama H."/>
            <person name="Satoh N."/>
            <person name="Takami S."/>
            <person name="Terashima Y."/>
            <person name="Suzuki O."/>
            <person name="Nakagawa S."/>
            <person name="Senoh A."/>
            <person name="Mizoguchi H."/>
            <person name="Goto Y."/>
            <person name="Shimizu F."/>
            <person name="Wakebe H."/>
            <person name="Hishigaki H."/>
            <person name="Watanabe T."/>
            <person name="Sugiyama A."/>
            <person name="Takemoto M."/>
            <person name="Kawakami B."/>
            <person name="Yamazaki M."/>
            <person name="Watanabe K."/>
            <person name="Kumagai A."/>
            <person name="Itakura S."/>
            <person name="Fukuzumi Y."/>
            <person name="Fujimori Y."/>
            <person name="Komiyama M."/>
            <person name="Tashiro H."/>
            <person name="Tanigami A."/>
            <person name="Fujiwara T."/>
            <person name="Ono T."/>
            <person name="Yamada K."/>
            <person name="Fujii Y."/>
            <person name="Ozaki K."/>
            <person name="Hirao M."/>
            <person name="Ohmori Y."/>
            <person name="Kawabata A."/>
            <person name="Hikiji T."/>
            <person name="Kobatake N."/>
            <person name="Inagaki H."/>
            <person name="Ikema Y."/>
            <person name="Okamoto S."/>
            <person name="Okitani R."/>
            <person name="Kawakami T."/>
            <person name="Noguchi S."/>
            <person name="Itoh T."/>
            <person name="Shigeta K."/>
            <person name="Senba T."/>
            <person name="Matsumura K."/>
            <person name="Nakajima Y."/>
            <person name="Mizuno T."/>
            <person name="Morinaga M."/>
            <person name="Sasaki M."/>
            <person name="Togashi T."/>
            <person name="Oyama M."/>
            <person name="Hata H."/>
            <person name="Watanabe M."/>
            <person name="Komatsu T."/>
            <person name="Mizushima-Sugano J."/>
            <person name="Satoh T."/>
            <person name="Shirai Y."/>
            <person name="Takahashi Y."/>
            <person name="Nakagawa K."/>
            <person name="Okumura K."/>
            <person name="Nagase T."/>
            <person name="Nomura N."/>
            <person name="Kikuchi H."/>
            <person name="Masuho Y."/>
            <person name="Yamashita R."/>
            <person name="Nakai K."/>
            <person name="Yada T."/>
            <person name="Nakamura Y."/>
            <person name="Ohara O."/>
            <person name="Isogai T."/>
            <person name="Sugano S."/>
        </authorList>
    </citation>
    <scope>NUCLEOTIDE SEQUENCE [LARGE SCALE MRNA]</scope>
    <scope>VARIANTS ALA-285 AND GLY-303</scope>
    <source>
        <tissue>Thymus</tissue>
    </source>
</reference>
<reference key="5">
    <citation type="submission" date="2004-06" db="EMBL/GenBank/DDBJ databases">
        <title>Cloning of human full open reading frames in Gateway(TM) system entry vector (pDONR201).</title>
        <authorList>
            <person name="Ebert L."/>
            <person name="Schick M."/>
            <person name="Neubert P."/>
            <person name="Schatten R."/>
            <person name="Henze S."/>
            <person name="Korn B."/>
        </authorList>
    </citation>
    <scope>NUCLEOTIDE SEQUENCE [LARGE SCALE MRNA]</scope>
    <scope>VARIANTS ALA-285 AND GLY-303</scope>
</reference>
<reference key="6">
    <citation type="journal article" date="2006" name="Nature">
        <title>The DNA sequence and biological annotation of human chromosome 1.</title>
        <authorList>
            <person name="Gregory S.G."/>
            <person name="Barlow K.F."/>
            <person name="McLay K.E."/>
            <person name="Kaul R."/>
            <person name="Swarbreck D."/>
            <person name="Dunham A."/>
            <person name="Scott C.E."/>
            <person name="Howe K.L."/>
            <person name="Woodfine K."/>
            <person name="Spencer C.C.A."/>
            <person name="Jones M.C."/>
            <person name="Gillson C."/>
            <person name="Searle S."/>
            <person name="Zhou Y."/>
            <person name="Kokocinski F."/>
            <person name="McDonald L."/>
            <person name="Evans R."/>
            <person name="Phillips K."/>
            <person name="Atkinson A."/>
            <person name="Cooper R."/>
            <person name="Jones C."/>
            <person name="Hall R.E."/>
            <person name="Andrews T.D."/>
            <person name="Lloyd C."/>
            <person name="Ainscough R."/>
            <person name="Almeida J.P."/>
            <person name="Ambrose K.D."/>
            <person name="Anderson F."/>
            <person name="Andrew R.W."/>
            <person name="Ashwell R.I.S."/>
            <person name="Aubin K."/>
            <person name="Babbage A.K."/>
            <person name="Bagguley C.L."/>
            <person name="Bailey J."/>
            <person name="Beasley H."/>
            <person name="Bethel G."/>
            <person name="Bird C.P."/>
            <person name="Bray-Allen S."/>
            <person name="Brown J.Y."/>
            <person name="Brown A.J."/>
            <person name="Buckley D."/>
            <person name="Burton J."/>
            <person name="Bye J."/>
            <person name="Carder C."/>
            <person name="Chapman J.C."/>
            <person name="Clark S.Y."/>
            <person name="Clarke G."/>
            <person name="Clee C."/>
            <person name="Cobley V."/>
            <person name="Collier R.E."/>
            <person name="Corby N."/>
            <person name="Coville G.J."/>
            <person name="Davies J."/>
            <person name="Deadman R."/>
            <person name="Dunn M."/>
            <person name="Earthrowl M."/>
            <person name="Ellington A.G."/>
            <person name="Errington H."/>
            <person name="Frankish A."/>
            <person name="Frankland J."/>
            <person name="French L."/>
            <person name="Garner P."/>
            <person name="Garnett J."/>
            <person name="Gay L."/>
            <person name="Ghori M.R.J."/>
            <person name="Gibson R."/>
            <person name="Gilby L.M."/>
            <person name="Gillett W."/>
            <person name="Glithero R.J."/>
            <person name="Grafham D.V."/>
            <person name="Griffiths C."/>
            <person name="Griffiths-Jones S."/>
            <person name="Grocock R."/>
            <person name="Hammond S."/>
            <person name="Harrison E.S.I."/>
            <person name="Hart E."/>
            <person name="Haugen E."/>
            <person name="Heath P.D."/>
            <person name="Holmes S."/>
            <person name="Holt K."/>
            <person name="Howden P.J."/>
            <person name="Hunt A.R."/>
            <person name="Hunt S.E."/>
            <person name="Hunter G."/>
            <person name="Isherwood J."/>
            <person name="James R."/>
            <person name="Johnson C."/>
            <person name="Johnson D."/>
            <person name="Joy A."/>
            <person name="Kay M."/>
            <person name="Kershaw J.K."/>
            <person name="Kibukawa M."/>
            <person name="Kimberley A.M."/>
            <person name="King A."/>
            <person name="Knights A.J."/>
            <person name="Lad H."/>
            <person name="Laird G."/>
            <person name="Lawlor S."/>
            <person name="Leongamornlert D.A."/>
            <person name="Lloyd D.M."/>
            <person name="Loveland J."/>
            <person name="Lovell J."/>
            <person name="Lush M.J."/>
            <person name="Lyne R."/>
            <person name="Martin S."/>
            <person name="Mashreghi-Mohammadi M."/>
            <person name="Matthews L."/>
            <person name="Matthews N.S.W."/>
            <person name="McLaren S."/>
            <person name="Milne S."/>
            <person name="Mistry S."/>
            <person name="Moore M.J.F."/>
            <person name="Nickerson T."/>
            <person name="O'Dell C.N."/>
            <person name="Oliver K."/>
            <person name="Palmeiri A."/>
            <person name="Palmer S.A."/>
            <person name="Parker A."/>
            <person name="Patel D."/>
            <person name="Pearce A.V."/>
            <person name="Peck A.I."/>
            <person name="Pelan S."/>
            <person name="Phelps K."/>
            <person name="Phillimore B.J."/>
            <person name="Plumb R."/>
            <person name="Rajan J."/>
            <person name="Raymond C."/>
            <person name="Rouse G."/>
            <person name="Saenphimmachak C."/>
            <person name="Sehra H.K."/>
            <person name="Sheridan E."/>
            <person name="Shownkeen R."/>
            <person name="Sims S."/>
            <person name="Skuce C.D."/>
            <person name="Smith M."/>
            <person name="Steward C."/>
            <person name="Subramanian S."/>
            <person name="Sycamore N."/>
            <person name="Tracey A."/>
            <person name="Tromans A."/>
            <person name="Van Helmond Z."/>
            <person name="Wall M."/>
            <person name="Wallis J.M."/>
            <person name="White S."/>
            <person name="Whitehead S.L."/>
            <person name="Wilkinson J.E."/>
            <person name="Willey D.L."/>
            <person name="Williams H."/>
            <person name="Wilming L."/>
            <person name="Wray P.W."/>
            <person name="Wu Z."/>
            <person name="Coulson A."/>
            <person name="Vaudin M."/>
            <person name="Sulston J.E."/>
            <person name="Durbin R.M."/>
            <person name="Hubbard T."/>
            <person name="Wooster R."/>
            <person name="Dunham I."/>
            <person name="Carter N.P."/>
            <person name="McVean G."/>
            <person name="Ross M.T."/>
            <person name="Harrow J."/>
            <person name="Olson M.V."/>
            <person name="Beck S."/>
            <person name="Rogers J."/>
            <person name="Bentley D.R."/>
        </authorList>
    </citation>
    <scope>NUCLEOTIDE SEQUENCE [LARGE SCALE GENOMIC DNA]</scope>
</reference>
<reference key="7">
    <citation type="submission" date="2005-09" db="EMBL/GenBank/DDBJ databases">
        <authorList>
            <person name="Mural R.J."/>
            <person name="Istrail S."/>
            <person name="Sutton G.G."/>
            <person name="Florea L."/>
            <person name="Halpern A.L."/>
            <person name="Mobarry C.M."/>
            <person name="Lippert R."/>
            <person name="Walenz B."/>
            <person name="Shatkay H."/>
            <person name="Dew I."/>
            <person name="Miller J.R."/>
            <person name="Flanigan M.J."/>
            <person name="Edwards N.J."/>
            <person name="Bolanos R."/>
            <person name="Fasulo D."/>
            <person name="Halldorsson B.V."/>
            <person name="Hannenhalli S."/>
            <person name="Turner R."/>
            <person name="Yooseph S."/>
            <person name="Lu F."/>
            <person name="Nusskern D.R."/>
            <person name="Shue B.C."/>
            <person name="Zheng X.H."/>
            <person name="Zhong F."/>
            <person name="Delcher A.L."/>
            <person name="Huson D.H."/>
            <person name="Kravitz S.A."/>
            <person name="Mouchard L."/>
            <person name="Reinert K."/>
            <person name="Remington K.A."/>
            <person name="Clark A.G."/>
            <person name="Waterman M.S."/>
            <person name="Eichler E.E."/>
            <person name="Adams M.D."/>
            <person name="Hunkapiller M.W."/>
            <person name="Myers E.W."/>
            <person name="Venter J.C."/>
        </authorList>
    </citation>
    <scope>NUCLEOTIDE SEQUENCE [LARGE SCALE GENOMIC DNA]</scope>
    <scope>VARIANTS ALA-285 AND GLY-303</scope>
</reference>
<reference key="8">
    <citation type="journal article" date="2004" name="Genome Res.">
        <title>The status, quality, and expansion of the NIH full-length cDNA project: the Mammalian Gene Collection (MGC).</title>
        <authorList>
            <consortium name="The MGC Project Team"/>
        </authorList>
    </citation>
    <scope>NUCLEOTIDE SEQUENCE [LARGE SCALE MRNA]</scope>
    <source>
        <tissue>Skin</tissue>
    </source>
</reference>
<reference key="9">
    <citation type="journal article" date="1996" name="FEBS Lett.">
        <title>GTPase properties of the interferon-induced human guanylate-binding protein 2.</title>
        <authorList>
            <person name="Neun R."/>
            <person name="Richter M.F."/>
            <person name="Staeheli P."/>
            <person name="Schwemmle M."/>
        </authorList>
    </citation>
    <scope>FUNCTION</scope>
    <scope>CATALYTIC ACTIVITY</scope>
    <scope>BIOPHYSICOCHEMICAL PROPERTIES</scope>
</reference>
<reference key="10">
    <citation type="journal article" date="2007" name="J. Interferon Cytokine Res.">
        <title>Unique features of different members of the human guanylate-binding protein family.</title>
        <authorList>
            <person name="Tripal P."/>
            <person name="Bauer M."/>
            <person name="Naschberger E."/>
            <person name="Mortinger T."/>
            <person name="Hohenadl C."/>
            <person name="Cornali E."/>
            <person name="Thurau M."/>
            <person name="Sturzl M."/>
        </authorList>
    </citation>
    <scope>SUBCELLULAR LOCATION</scope>
    <scope>INDUCTION</scope>
</reference>
<reference key="11">
    <citation type="journal article" date="2010" name="PLoS ONE">
        <title>Intracellular trafficking of guanylate-binding proteins is regulated by heterodimerization in a hierarchical manner.</title>
        <authorList>
            <person name="Britzen-Laurent N."/>
            <person name="Bauer M."/>
            <person name="Berton V."/>
            <person name="Fischer N."/>
            <person name="Syguda A."/>
            <person name="Reipschlager S."/>
            <person name="Naschberger E."/>
            <person name="Herrmann C."/>
            <person name="Sturzl M."/>
        </authorList>
    </citation>
    <scope>SUBCELLULAR LOCATION</scope>
    <scope>ISOPRENYLATION AT CYS-588</scope>
    <scope>METHYLATION AT CYS-588</scope>
    <scope>DIMERIZATION</scope>
    <scope>MUTAGENESIS OF 588-CYS--LEU-591</scope>
</reference>
<reference key="12">
    <citation type="journal article" date="2017" name="Cell Host Microbe">
        <title>GBPs inhibit motility of Shigella flexneri but are targeted for degradation by the bacterial ubiquitin ligase IpaH9.8.</title>
        <authorList>
            <person name="Wandel M.P."/>
            <person name="Pathe C."/>
            <person name="Werner E.I."/>
            <person name="Ellison C.J."/>
            <person name="Boyle K.B."/>
            <person name="von der Malsburg A."/>
            <person name="Rohde J."/>
            <person name="Randow F."/>
        </authorList>
    </citation>
    <scope>UBIQUITINATION (MICROBIAL INFECTION)</scope>
</reference>
<reference key="13">
    <citation type="journal article" date="2017" name="Nature">
        <title>Ubiquitination and degradation of GBPs by a Shigella effector to suppress host defence.</title>
        <authorList>
            <person name="Li P."/>
            <person name="Jiang W."/>
            <person name="Yu Q."/>
            <person name="Liu W."/>
            <person name="Zhou P."/>
            <person name="Li J."/>
            <person name="Xu J."/>
            <person name="Xu B."/>
            <person name="Wang F."/>
            <person name="Shao F."/>
        </authorList>
    </citation>
    <scope>UBIQUITINATION (MICROBIAL INFECTION)</scope>
</reference>
<reference key="14">
    <citation type="journal article" date="2019" name="Cell Rep.">
        <title>Guanylate-binding proteins 2 and 5 exert broad antiviral activity by inhibiting furin-mediated processing of viral envelope proteins.</title>
        <authorList>
            <person name="Braun E."/>
            <person name="Hotter D."/>
            <person name="Koepke L."/>
            <person name="Zech F."/>
            <person name="Gross R."/>
            <person name="Sparrer K.M.J."/>
            <person name="Mueller J.A."/>
            <person name="Pfaller C.K."/>
            <person name="Heusinger E."/>
            <person name="Wombacher R."/>
            <person name="Sutter K."/>
            <person name="Dittmer U."/>
            <person name="Winkler M."/>
            <person name="Simmons G."/>
            <person name="Jakobsen M.R."/>
            <person name="Conzelmann K.K."/>
            <person name="Poehlmann S."/>
            <person name="Muench J."/>
            <person name="Fackler O.T."/>
            <person name="Kirchhoff F."/>
            <person name="Sauter D."/>
        </authorList>
    </citation>
    <scope>FUNCTION</scope>
    <scope>SUBCELLULAR LOCATION</scope>
    <scope>ISOPRENYLATION AT CYS-588</scope>
    <scope>MUTAGENESIS OF CYS-588</scope>
</reference>
<reference evidence="22" key="15">
    <citation type="journal article" date="2021" name="Proc. Natl. Acad. Sci. U.S.A.">
        <title>Structural basis for GTP-induced dimerization and antiviral function of guanylate-binding proteins.</title>
        <authorList>
            <person name="Cui W."/>
            <person name="Braun E."/>
            <person name="Wang W."/>
            <person name="Tang J."/>
            <person name="Zheng Y."/>
            <person name="Slater B."/>
            <person name="Li N."/>
            <person name="Chen C."/>
            <person name="Liu Q."/>
            <person name="Wang B."/>
            <person name="Li X."/>
            <person name="Duan Y."/>
            <person name="Xiao Y."/>
            <person name="Ti R."/>
            <person name="Hotter D."/>
            <person name="Ji X."/>
            <person name="Zhang L."/>
            <person name="Cui J."/>
            <person name="Xiong Y."/>
            <person name="Sauter D."/>
            <person name="Wang Z."/>
            <person name="Kirchhoff F."/>
            <person name="Yang H."/>
        </authorList>
    </citation>
    <scope>X-RAY CRYSTALLOGRAPHY (2.60 ANGSTROMS)</scope>
</reference>